<dbReference type="EC" id="2.4.1.-" evidence="2"/>
<dbReference type="EMBL" id="AK046527">
    <property type="protein sequence ID" value="BAC32773.1"/>
    <property type="molecule type" value="mRNA"/>
</dbReference>
<dbReference type="EMBL" id="AK047322">
    <property type="protein sequence ID" value="BAC33023.1"/>
    <property type="status" value="ALT_INIT"/>
    <property type="molecule type" value="mRNA"/>
</dbReference>
<dbReference type="EMBL" id="AK052446">
    <property type="protein sequence ID" value="BAC34995.1"/>
    <property type="molecule type" value="mRNA"/>
</dbReference>
<dbReference type="EMBL" id="AK080590">
    <property type="protein sequence ID" value="BAC37950.1"/>
    <property type="molecule type" value="mRNA"/>
</dbReference>
<dbReference type="EMBL" id="AK080858">
    <property type="protein sequence ID" value="BAC38047.1"/>
    <property type="molecule type" value="mRNA"/>
</dbReference>
<dbReference type="EMBL" id="AK148285">
    <property type="protein sequence ID" value="BAE28458.1"/>
    <property type="molecule type" value="mRNA"/>
</dbReference>
<dbReference type="EMBL" id="BC055060">
    <property type="protein sequence ID" value="AAH55060.1"/>
    <property type="molecule type" value="mRNA"/>
</dbReference>
<dbReference type="CCDS" id="CCDS18755.1">
    <molecule id="Q7TPN3-1"/>
</dbReference>
<dbReference type="CCDS" id="CCDS51322.1">
    <molecule id="Q7TPN3-2"/>
</dbReference>
<dbReference type="RefSeq" id="NP_001139427.1">
    <property type="nucleotide sequence ID" value="NM_001145955.1"/>
</dbReference>
<dbReference type="RefSeq" id="NP_001139428.1">
    <molecule id="Q7TPN3-2"/>
    <property type="nucleotide sequence ID" value="NM_001145956.1"/>
</dbReference>
<dbReference type="RefSeq" id="NP_001343395.1">
    <molecule id="Q7TPN3-1"/>
    <property type="nucleotide sequence ID" value="NM_001356466.1"/>
</dbReference>
<dbReference type="RefSeq" id="NP_848813.3">
    <molecule id="Q7TPN3-1"/>
    <property type="nucleotide sequence ID" value="NM_178698.5"/>
</dbReference>
<dbReference type="RefSeq" id="XP_006538810.1">
    <property type="nucleotide sequence ID" value="XM_006538747.3"/>
</dbReference>
<dbReference type="FunCoup" id="Q7TPN3">
    <property type="interactions" value="604"/>
</dbReference>
<dbReference type="STRING" id="10090.ENSMUSP00000050647"/>
<dbReference type="CAZy" id="GT76">
    <property type="family name" value="Glycosyltransferase Family 76"/>
</dbReference>
<dbReference type="PhosphoSitePlus" id="Q7TPN3"/>
<dbReference type="PaxDb" id="10090-ENSMUSP00000050647"/>
<dbReference type="ProteomicsDB" id="288160">
    <molecule id="Q7TPN3-1"/>
</dbReference>
<dbReference type="ProteomicsDB" id="288161">
    <molecule id="Q7TPN3-2"/>
</dbReference>
<dbReference type="Antibodypedia" id="30687">
    <property type="antibodies" value="101 antibodies from 17 providers"/>
</dbReference>
<dbReference type="Ensembl" id="ENSMUST00000062118.11">
    <molecule id="Q7TPN3-1"/>
    <property type="protein sequence ID" value="ENSMUSP00000050647.5"/>
    <property type="gene ID" value="ENSMUSG00000043257.16"/>
</dbReference>
<dbReference type="Ensembl" id="ENSMUST00000067902.13">
    <molecule id="Q7TPN3-2"/>
    <property type="protein sequence ID" value="ENSMUSP00000065601.7"/>
    <property type="gene ID" value="ENSMUSG00000043257.16"/>
</dbReference>
<dbReference type="GeneID" id="230801"/>
<dbReference type="KEGG" id="mmu:230801"/>
<dbReference type="UCSC" id="uc008vdf.2">
    <molecule id="Q7TPN3-1"/>
    <property type="organism name" value="mouse"/>
</dbReference>
<dbReference type="UCSC" id="uc008vdg.2">
    <molecule id="Q7TPN3-2"/>
    <property type="organism name" value="mouse"/>
</dbReference>
<dbReference type="AGR" id="MGI:2442480"/>
<dbReference type="CTD" id="55650"/>
<dbReference type="MGI" id="MGI:2442480">
    <property type="gene designation" value="Pigv"/>
</dbReference>
<dbReference type="VEuPathDB" id="HostDB:ENSMUSG00000043257"/>
<dbReference type="eggNOG" id="KOG2647">
    <property type="taxonomic scope" value="Eukaryota"/>
</dbReference>
<dbReference type="GeneTree" id="ENSGT00390000013174"/>
<dbReference type="HOGENOM" id="CLU_029048_3_2_1"/>
<dbReference type="InParanoid" id="Q7TPN3"/>
<dbReference type="OMA" id="GALFIWC"/>
<dbReference type="OrthoDB" id="10252502at2759"/>
<dbReference type="PhylomeDB" id="Q7TPN3"/>
<dbReference type="TreeFam" id="TF314515"/>
<dbReference type="Reactome" id="R-MMU-162710">
    <property type="pathway name" value="Synthesis of glycosylphosphatidylinositol (GPI)"/>
</dbReference>
<dbReference type="UniPathway" id="UPA00196"/>
<dbReference type="BioGRID-ORCS" id="230801">
    <property type="hits" value="11 hits in 76 CRISPR screens"/>
</dbReference>
<dbReference type="ChiTaRS" id="Pigv">
    <property type="organism name" value="mouse"/>
</dbReference>
<dbReference type="PRO" id="PR:Q7TPN3"/>
<dbReference type="Proteomes" id="UP000000589">
    <property type="component" value="Chromosome 4"/>
</dbReference>
<dbReference type="RNAct" id="Q7TPN3">
    <property type="molecule type" value="protein"/>
</dbReference>
<dbReference type="Bgee" id="ENSMUSG00000043257">
    <property type="expression patterns" value="Expressed in ear vesicle and 200 other cell types or tissues"/>
</dbReference>
<dbReference type="GO" id="GO:0005789">
    <property type="term" value="C:endoplasmic reticulum membrane"/>
    <property type="evidence" value="ECO:0007669"/>
    <property type="project" value="UniProtKB-SubCell"/>
</dbReference>
<dbReference type="GO" id="GO:0000009">
    <property type="term" value="F:alpha-1,6-mannosyltransferase activity"/>
    <property type="evidence" value="ECO:0007669"/>
    <property type="project" value="Ensembl"/>
</dbReference>
<dbReference type="GO" id="GO:0004376">
    <property type="term" value="F:glycolipid mannosyltransferase activity"/>
    <property type="evidence" value="ECO:0007669"/>
    <property type="project" value="InterPro"/>
</dbReference>
<dbReference type="GO" id="GO:0006506">
    <property type="term" value="P:GPI anchor biosynthetic process"/>
    <property type="evidence" value="ECO:0007669"/>
    <property type="project" value="UniProtKB-UniPathway"/>
</dbReference>
<dbReference type="InterPro" id="IPR007315">
    <property type="entry name" value="PIG-V/Gpi18"/>
</dbReference>
<dbReference type="PANTHER" id="PTHR12468">
    <property type="entry name" value="GPI MANNOSYLTRANSFERASE 2"/>
    <property type="match status" value="1"/>
</dbReference>
<dbReference type="PANTHER" id="PTHR12468:SF2">
    <property type="entry name" value="GPI MANNOSYLTRANSFERASE 2"/>
    <property type="match status" value="1"/>
</dbReference>
<dbReference type="Pfam" id="PF04188">
    <property type="entry name" value="Mannosyl_trans2"/>
    <property type="match status" value="1"/>
</dbReference>
<sequence>MGLLDPSQKEVLRFAVNCRILTLVLQALFNLIIPDHHADAFCPPRLAPSGSADQLVEGLLGGLSRWDAEHFLFIAEHGYLYEHNFAFFPGFPLALLMGTELLRPLQGLLSQRSCLLVSVALLNLLFSVLAAVALHDLGCLVLHCPRQALCAALLFCISPANVFLAAGYSEALFAFLTFSAMGQLERGRGWASGLLFALAAGVRSNGLVSLGFLLHSQCRGFCSSLAVLSPWKPLVKLMASVCLSVLIVSLPFALFQYRAYIQFCSPGSAPSIPEPLLQLAADKGYRLAGENAPPWCSWDLPLIYNYIQDVYWNVGLLRYYELKQVPNFLLATPVTVLVVWATWTYVTTHPWLCLTLGLQRTKDRENPEKPHRGFLSPKVFVYLVHAAALLVFGGLCMHVQVLTRFLASSTPIMYWFPAHLLQDQEPLLRCVDTEPGKLPQEKSPPGQKAPRNCLMKLFYDWKRCSPVTRCVLVYFLTYWLLGLILHCNFLPWT</sequence>
<organism>
    <name type="scientific">Mus musculus</name>
    <name type="common">Mouse</name>
    <dbReference type="NCBI Taxonomy" id="10090"/>
    <lineage>
        <taxon>Eukaryota</taxon>
        <taxon>Metazoa</taxon>
        <taxon>Chordata</taxon>
        <taxon>Craniata</taxon>
        <taxon>Vertebrata</taxon>
        <taxon>Euteleostomi</taxon>
        <taxon>Mammalia</taxon>
        <taxon>Eutheria</taxon>
        <taxon>Euarchontoglires</taxon>
        <taxon>Glires</taxon>
        <taxon>Rodentia</taxon>
        <taxon>Myomorpha</taxon>
        <taxon>Muroidea</taxon>
        <taxon>Muridae</taxon>
        <taxon>Murinae</taxon>
        <taxon>Mus</taxon>
        <taxon>Mus</taxon>
    </lineage>
</organism>
<feature type="chain" id="PRO_0000246235" description="GPI alpha-1,6-mannosyltransferase 2">
    <location>
        <begin position="1"/>
        <end position="493"/>
    </location>
</feature>
<feature type="topological domain" description="Cytoplasmic" evidence="2">
    <location>
        <begin position="1"/>
        <end position="13"/>
    </location>
</feature>
<feature type="transmembrane region" description="Helical" evidence="3">
    <location>
        <begin position="14"/>
        <end position="34"/>
    </location>
</feature>
<feature type="topological domain" description="Lumenal" evidence="2">
    <location>
        <begin position="35"/>
        <end position="77"/>
    </location>
</feature>
<feature type="transmembrane region" description="Helical" evidence="3">
    <location>
        <begin position="78"/>
        <end position="98"/>
    </location>
</feature>
<feature type="topological domain" description="Cytoplasmic" evidence="2">
    <location>
        <begin position="99"/>
        <end position="113"/>
    </location>
</feature>
<feature type="transmembrane region" description="Helical" evidence="3">
    <location>
        <begin position="114"/>
        <end position="134"/>
    </location>
</feature>
<feature type="topological domain" description="Lumenal" evidence="2">
    <location>
        <begin position="135"/>
        <end position="136"/>
    </location>
</feature>
<feature type="transmembrane region" description="Helical" evidence="3">
    <location>
        <begin position="137"/>
        <end position="157"/>
    </location>
</feature>
<feature type="topological domain" description="Cytoplasmic" evidence="2">
    <location>
        <begin position="158"/>
        <end position="161"/>
    </location>
</feature>
<feature type="transmembrane region" description="Helical" evidence="3">
    <location>
        <begin position="162"/>
        <end position="182"/>
    </location>
</feature>
<feature type="topological domain" description="Lumenal" evidence="2">
    <location>
        <begin position="183"/>
        <end position="192"/>
    </location>
</feature>
<feature type="transmembrane region" description="Helical" evidence="3">
    <location>
        <begin position="193"/>
        <end position="213"/>
    </location>
</feature>
<feature type="topological domain" description="Cytoplasmic" evidence="2">
    <location>
        <begin position="214"/>
        <end position="234"/>
    </location>
</feature>
<feature type="transmembrane region" description="Helical" evidence="3">
    <location>
        <begin position="235"/>
        <end position="255"/>
    </location>
</feature>
<feature type="topological domain" description="Lumenal" evidence="2">
    <location>
        <begin position="256"/>
        <end position="327"/>
    </location>
</feature>
<feature type="transmembrane region" description="Helical" evidence="3">
    <location>
        <begin position="328"/>
        <end position="348"/>
    </location>
</feature>
<feature type="topological domain" description="Cytoplasmic" evidence="2">
    <location>
        <begin position="349"/>
        <end position="378"/>
    </location>
</feature>
<feature type="transmembrane region" description="Helical" evidence="3">
    <location>
        <begin position="379"/>
        <end position="399"/>
    </location>
</feature>
<feature type="topological domain" description="Lumenal" evidence="2">
    <location>
        <begin position="400"/>
        <end position="469"/>
    </location>
</feature>
<feature type="transmembrane region" description="Helical" evidence="3">
    <location>
        <begin position="470"/>
        <end position="490"/>
    </location>
</feature>
<feature type="topological domain" description="Cytoplasmic" evidence="2">
    <location>
        <begin position="491"/>
        <end position="493"/>
    </location>
</feature>
<feature type="splice variant" id="VSP_019840" description="In isoform 2." evidence="4">
    <location>
        <begin position="27"/>
        <end position="400"/>
    </location>
</feature>
<feature type="sequence conflict" description="In Ref. 1; BAC34995." evidence="5" ref="1">
    <original>C</original>
    <variation>F</variation>
    <location>
        <position position="218"/>
    </location>
</feature>
<feature type="sequence conflict" description="In Ref. 2; AAH55060." evidence="5" ref="2">
    <original>D</original>
    <variation>N</variation>
    <location>
        <position position="460"/>
    </location>
</feature>
<evidence type="ECO:0000250" key="1">
    <source>
        <dbReference type="UniProtKB" id="A0A8C2M425"/>
    </source>
</evidence>
<evidence type="ECO:0000250" key="2">
    <source>
        <dbReference type="UniProtKB" id="Q9NUD9"/>
    </source>
</evidence>
<evidence type="ECO:0000255" key="3"/>
<evidence type="ECO:0000303" key="4">
    <source>
    </source>
</evidence>
<evidence type="ECO:0000305" key="5"/>
<evidence type="ECO:0000312" key="6">
    <source>
        <dbReference type="MGI" id="MGI:2442480"/>
    </source>
</evidence>
<comment type="function">
    <text evidence="1 2">Alpha-1,6-mannosyltransferase that catalyzes the transfer of the second mannose, via an alpha-1,6 bond, from a dolichol-phosphate-mannose (Dol-P-Man) to the alpha-D-Man-(1-&gt;4)-alpha-D-GlcN-(1-&gt;6)-(1-radyl,2-acyl-sn-glycero-3-phospho)-2-acyl-inositol (also termed H2) intermediate to generate an alpha-D-Man-(1-&gt;6)-alpha-D-Man-(1-&gt;4)-alpha-D-GlcN-(1-&gt;6)-(1-radyl,2-acyl-sn-glycero-3-phospho)-2-acyl-inositol (also termed H3) and participates in the seventh step of the glycosylphosphatidylinositol-anchor biosynthesis (By similarity). Also transfers the second mannose on a 2-PEtn-alpha-D-Man-(1-&gt;4)-alpha-D-GlcN-(1-&gt;6)-(1-radyl,2-acyl-sn-glycero-3-phospho)-2-acyl-inositol (also termed H5) (By similarity).</text>
</comment>
<comment type="pathway">
    <text evidence="2">Glycolipid biosynthesis; glycosylphosphatidylinositol-anchor biosynthesis.</text>
</comment>
<comment type="subcellular location">
    <subcellularLocation>
        <location evidence="2">Endoplasmic reticulum membrane</location>
        <topology evidence="2">Multi-pass membrane protein</topology>
    </subcellularLocation>
</comment>
<comment type="alternative products">
    <event type="alternative splicing"/>
    <isoform>
        <id>Q7TPN3-1</id>
        <name>1</name>
        <sequence type="displayed"/>
    </isoform>
    <isoform>
        <id>Q7TPN3-2</id>
        <name>2</name>
        <sequence type="described" ref="VSP_019840"/>
    </isoform>
</comment>
<comment type="PTM">
    <text evidence="2">Not N-glycosylated.</text>
</comment>
<comment type="similarity">
    <text evidence="5">Belongs to the PIGV family.</text>
</comment>
<comment type="sequence caution" evidence="5">
    <conflict type="erroneous initiation">
        <sequence resource="EMBL-CDS" id="BAC33023"/>
    </conflict>
    <text>Extended N-terminus.</text>
</comment>
<keyword id="KW-0025">Alternative splicing</keyword>
<keyword id="KW-0256">Endoplasmic reticulum</keyword>
<keyword id="KW-0328">Glycosyltransferase</keyword>
<keyword id="KW-0337">GPI-anchor biosynthesis</keyword>
<keyword id="KW-0472">Membrane</keyword>
<keyword id="KW-1185">Reference proteome</keyword>
<keyword id="KW-0808">Transferase</keyword>
<keyword id="KW-0812">Transmembrane</keyword>
<keyword id="KW-1133">Transmembrane helix</keyword>
<gene>
    <name evidence="6" type="primary">Pigv</name>
</gene>
<proteinExistence type="evidence at transcript level"/>
<accession>Q7TPN3</accession>
<accession>Q8BGL2</accession>
<accession>Q8BJR5</accession>
<accession>Q8BWH9</accession>
<accession>Q8BXF5</accession>
<name>PIGV_MOUSE</name>
<reference key="1">
    <citation type="journal article" date="2005" name="Science">
        <title>The transcriptional landscape of the mammalian genome.</title>
        <authorList>
            <person name="Carninci P."/>
            <person name="Kasukawa T."/>
            <person name="Katayama S."/>
            <person name="Gough J."/>
            <person name="Frith M.C."/>
            <person name="Maeda N."/>
            <person name="Oyama R."/>
            <person name="Ravasi T."/>
            <person name="Lenhard B."/>
            <person name="Wells C."/>
            <person name="Kodzius R."/>
            <person name="Shimokawa K."/>
            <person name="Bajic V.B."/>
            <person name="Brenner S.E."/>
            <person name="Batalov S."/>
            <person name="Forrest A.R."/>
            <person name="Zavolan M."/>
            <person name="Davis M.J."/>
            <person name="Wilming L.G."/>
            <person name="Aidinis V."/>
            <person name="Allen J.E."/>
            <person name="Ambesi-Impiombato A."/>
            <person name="Apweiler R."/>
            <person name="Aturaliya R.N."/>
            <person name="Bailey T.L."/>
            <person name="Bansal M."/>
            <person name="Baxter L."/>
            <person name="Beisel K.W."/>
            <person name="Bersano T."/>
            <person name="Bono H."/>
            <person name="Chalk A.M."/>
            <person name="Chiu K.P."/>
            <person name="Choudhary V."/>
            <person name="Christoffels A."/>
            <person name="Clutterbuck D.R."/>
            <person name="Crowe M.L."/>
            <person name="Dalla E."/>
            <person name="Dalrymple B.P."/>
            <person name="de Bono B."/>
            <person name="Della Gatta G."/>
            <person name="di Bernardo D."/>
            <person name="Down T."/>
            <person name="Engstrom P."/>
            <person name="Fagiolini M."/>
            <person name="Faulkner G."/>
            <person name="Fletcher C.F."/>
            <person name="Fukushima T."/>
            <person name="Furuno M."/>
            <person name="Futaki S."/>
            <person name="Gariboldi M."/>
            <person name="Georgii-Hemming P."/>
            <person name="Gingeras T.R."/>
            <person name="Gojobori T."/>
            <person name="Green R.E."/>
            <person name="Gustincich S."/>
            <person name="Harbers M."/>
            <person name="Hayashi Y."/>
            <person name="Hensch T.K."/>
            <person name="Hirokawa N."/>
            <person name="Hill D."/>
            <person name="Huminiecki L."/>
            <person name="Iacono M."/>
            <person name="Ikeo K."/>
            <person name="Iwama A."/>
            <person name="Ishikawa T."/>
            <person name="Jakt M."/>
            <person name="Kanapin A."/>
            <person name="Katoh M."/>
            <person name="Kawasawa Y."/>
            <person name="Kelso J."/>
            <person name="Kitamura H."/>
            <person name="Kitano H."/>
            <person name="Kollias G."/>
            <person name="Krishnan S.P."/>
            <person name="Kruger A."/>
            <person name="Kummerfeld S.K."/>
            <person name="Kurochkin I.V."/>
            <person name="Lareau L.F."/>
            <person name="Lazarevic D."/>
            <person name="Lipovich L."/>
            <person name="Liu J."/>
            <person name="Liuni S."/>
            <person name="McWilliam S."/>
            <person name="Madan Babu M."/>
            <person name="Madera M."/>
            <person name="Marchionni L."/>
            <person name="Matsuda H."/>
            <person name="Matsuzawa S."/>
            <person name="Miki H."/>
            <person name="Mignone F."/>
            <person name="Miyake S."/>
            <person name="Morris K."/>
            <person name="Mottagui-Tabar S."/>
            <person name="Mulder N."/>
            <person name="Nakano N."/>
            <person name="Nakauchi H."/>
            <person name="Ng P."/>
            <person name="Nilsson R."/>
            <person name="Nishiguchi S."/>
            <person name="Nishikawa S."/>
            <person name="Nori F."/>
            <person name="Ohara O."/>
            <person name="Okazaki Y."/>
            <person name="Orlando V."/>
            <person name="Pang K.C."/>
            <person name="Pavan W.J."/>
            <person name="Pavesi G."/>
            <person name="Pesole G."/>
            <person name="Petrovsky N."/>
            <person name="Piazza S."/>
            <person name="Reed J."/>
            <person name="Reid J.F."/>
            <person name="Ring B.Z."/>
            <person name="Ringwald M."/>
            <person name="Rost B."/>
            <person name="Ruan Y."/>
            <person name="Salzberg S.L."/>
            <person name="Sandelin A."/>
            <person name="Schneider C."/>
            <person name="Schoenbach C."/>
            <person name="Sekiguchi K."/>
            <person name="Semple C.A."/>
            <person name="Seno S."/>
            <person name="Sessa L."/>
            <person name="Sheng Y."/>
            <person name="Shibata Y."/>
            <person name="Shimada H."/>
            <person name="Shimada K."/>
            <person name="Silva D."/>
            <person name="Sinclair B."/>
            <person name="Sperling S."/>
            <person name="Stupka E."/>
            <person name="Sugiura K."/>
            <person name="Sultana R."/>
            <person name="Takenaka Y."/>
            <person name="Taki K."/>
            <person name="Tammoja K."/>
            <person name="Tan S.L."/>
            <person name="Tang S."/>
            <person name="Taylor M.S."/>
            <person name="Tegner J."/>
            <person name="Teichmann S.A."/>
            <person name="Ueda H.R."/>
            <person name="van Nimwegen E."/>
            <person name="Verardo R."/>
            <person name="Wei C.L."/>
            <person name="Yagi K."/>
            <person name="Yamanishi H."/>
            <person name="Zabarovsky E."/>
            <person name="Zhu S."/>
            <person name="Zimmer A."/>
            <person name="Hide W."/>
            <person name="Bult C."/>
            <person name="Grimmond S.M."/>
            <person name="Teasdale R.D."/>
            <person name="Liu E.T."/>
            <person name="Brusic V."/>
            <person name="Quackenbush J."/>
            <person name="Wahlestedt C."/>
            <person name="Mattick J.S."/>
            <person name="Hume D.A."/>
            <person name="Kai C."/>
            <person name="Sasaki D."/>
            <person name="Tomaru Y."/>
            <person name="Fukuda S."/>
            <person name="Kanamori-Katayama M."/>
            <person name="Suzuki M."/>
            <person name="Aoki J."/>
            <person name="Arakawa T."/>
            <person name="Iida J."/>
            <person name="Imamura K."/>
            <person name="Itoh M."/>
            <person name="Kato T."/>
            <person name="Kawaji H."/>
            <person name="Kawagashira N."/>
            <person name="Kawashima T."/>
            <person name="Kojima M."/>
            <person name="Kondo S."/>
            <person name="Konno H."/>
            <person name="Nakano K."/>
            <person name="Ninomiya N."/>
            <person name="Nishio T."/>
            <person name="Okada M."/>
            <person name="Plessy C."/>
            <person name="Shibata K."/>
            <person name="Shiraki T."/>
            <person name="Suzuki S."/>
            <person name="Tagami M."/>
            <person name="Waki K."/>
            <person name="Watahiki A."/>
            <person name="Okamura-Oho Y."/>
            <person name="Suzuki H."/>
            <person name="Kawai J."/>
            <person name="Hayashizaki Y."/>
        </authorList>
    </citation>
    <scope>NUCLEOTIDE SEQUENCE [LARGE SCALE MRNA] (ISOFORMS 1 AND 2)</scope>
    <source>
        <strain>C57BL/6J</strain>
        <tissue>Adrenal gland</tissue>
        <tissue>Cerebellum</tissue>
        <tissue>Corpora quadrigemina</tissue>
        <tissue>Lung</tissue>
    </source>
</reference>
<reference key="2">
    <citation type="journal article" date="2004" name="Genome Res.">
        <title>The status, quality, and expansion of the NIH full-length cDNA project: the Mammalian Gene Collection (MGC).</title>
        <authorList>
            <consortium name="The MGC Project Team"/>
        </authorList>
    </citation>
    <scope>NUCLEOTIDE SEQUENCE [LARGE SCALE MRNA] (ISOFORM 1)</scope>
    <source>
        <strain>FVB/N</strain>
        <tissue>Colon</tissue>
    </source>
</reference>
<protein>
    <recommendedName>
        <fullName evidence="5">GPI alpha-1,6-mannosyltransferase 2</fullName>
        <ecNumber evidence="2">2.4.1.-</ecNumber>
    </recommendedName>
    <alternativeName>
        <fullName>GPI mannosyltransferase II</fullName>
        <shortName evidence="2">GPI-MT-II</shortName>
    </alternativeName>
    <alternativeName>
        <fullName evidence="2">Phosphatidylinositol-glycan biosynthesis class V protein</fullName>
        <shortName evidence="2">PIG-V</shortName>
    </alternativeName>
</protein>